<feature type="chain" id="PRO_0000236897" description="Aspartate 1-decarboxylase beta chain" evidence="1">
    <location>
        <begin position="1"/>
        <end position="24"/>
    </location>
</feature>
<feature type="chain" id="PRO_0000236898" description="Aspartate 1-decarboxylase alpha chain" evidence="1">
    <location>
        <begin position="25"/>
        <end position="127"/>
    </location>
</feature>
<feature type="active site" description="Schiff-base intermediate with substrate; via pyruvic acid" evidence="1">
    <location>
        <position position="25"/>
    </location>
</feature>
<feature type="active site" description="Proton donor" evidence="1">
    <location>
        <position position="58"/>
    </location>
</feature>
<feature type="binding site" evidence="1">
    <location>
        <position position="57"/>
    </location>
    <ligand>
        <name>substrate</name>
    </ligand>
</feature>
<feature type="binding site" evidence="1">
    <location>
        <begin position="73"/>
        <end position="75"/>
    </location>
    <ligand>
        <name>substrate</name>
    </ligand>
</feature>
<feature type="modified residue" description="Pyruvic acid (Ser)" evidence="1">
    <location>
        <position position="25"/>
    </location>
</feature>
<keyword id="KW-0068">Autocatalytic cleavage</keyword>
<keyword id="KW-0963">Cytoplasm</keyword>
<keyword id="KW-0210">Decarboxylase</keyword>
<keyword id="KW-0456">Lyase</keyword>
<keyword id="KW-0566">Pantothenate biosynthesis</keyword>
<keyword id="KW-0670">Pyruvate</keyword>
<keyword id="KW-0704">Schiff base</keyword>
<keyword id="KW-0865">Zymogen</keyword>
<sequence>MIRTMMNAKIHRARVTESNLNYVGSITIDSDILEAVDILPNEKVAIVNNNNGARFETYVIAGERGSGKICLNGAASRLVEVGDVVIIMTYAQLNEEEIKHHAPKVAVMNEDNVIIEMIHEKENTIVL</sequence>
<proteinExistence type="inferred from homology"/>
<reference key="1">
    <citation type="journal article" date="2007" name="PLoS ONE">
        <title>Molecular correlates of host specialization in Staphylococcus aureus.</title>
        <authorList>
            <person name="Herron-Olson L."/>
            <person name="Fitzgerald J.R."/>
            <person name="Musser J.M."/>
            <person name="Kapur V."/>
        </authorList>
    </citation>
    <scope>NUCLEOTIDE SEQUENCE [LARGE SCALE GENOMIC DNA]</scope>
    <source>
        <strain>bovine RF122 / ET3-1</strain>
    </source>
</reference>
<protein>
    <recommendedName>
        <fullName evidence="1">Aspartate 1-decarboxylase</fullName>
        <ecNumber evidence="1">4.1.1.11</ecNumber>
    </recommendedName>
    <alternativeName>
        <fullName evidence="1">Aspartate alpha-decarboxylase</fullName>
    </alternativeName>
    <component>
        <recommendedName>
            <fullName evidence="1">Aspartate 1-decarboxylase beta chain</fullName>
        </recommendedName>
    </component>
    <component>
        <recommendedName>
            <fullName evidence="1">Aspartate 1-decarboxylase alpha chain</fullName>
        </recommendedName>
    </component>
</protein>
<gene>
    <name evidence="1" type="primary">panD</name>
    <name type="ordered locus">SAB2470c</name>
</gene>
<evidence type="ECO:0000255" key="1">
    <source>
        <dbReference type="HAMAP-Rule" id="MF_00446"/>
    </source>
</evidence>
<comment type="function">
    <text evidence="1">Catalyzes the pyruvoyl-dependent decarboxylation of aspartate to produce beta-alanine.</text>
</comment>
<comment type="catalytic activity">
    <reaction evidence="1">
        <text>L-aspartate + H(+) = beta-alanine + CO2</text>
        <dbReference type="Rhea" id="RHEA:19497"/>
        <dbReference type="ChEBI" id="CHEBI:15378"/>
        <dbReference type="ChEBI" id="CHEBI:16526"/>
        <dbReference type="ChEBI" id="CHEBI:29991"/>
        <dbReference type="ChEBI" id="CHEBI:57966"/>
        <dbReference type="EC" id="4.1.1.11"/>
    </reaction>
</comment>
<comment type="cofactor">
    <cofactor evidence="1">
        <name>pyruvate</name>
        <dbReference type="ChEBI" id="CHEBI:15361"/>
    </cofactor>
    <text evidence="1">Binds 1 pyruvoyl group covalently per subunit.</text>
</comment>
<comment type="pathway">
    <text evidence="1">Cofactor biosynthesis; (R)-pantothenate biosynthesis; beta-alanine from L-aspartate: step 1/1.</text>
</comment>
<comment type="subunit">
    <text evidence="1">Heterooctamer of four alpha and four beta subunits.</text>
</comment>
<comment type="subcellular location">
    <subcellularLocation>
        <location evidence="1">Cytoplasm</location>
    </subcellularLocation>
</comment>
<comment type="PTM">
    <text evidence="1">Is synthesized initially as an inactive proenzyme, which is activated by self-cleavage at a specific serine bond to produce a beta-subunit with a hydroxyl group at its C-terminus and an alpha-subunit with a pyruvoyl group at its N-terminus.</text>
</comment>
<comment type="similarity">
    <text evidence="1">Belongs to the PanD family.</text>
</comment>
<organism>
    <name type="scientific">Staphylococcus aureus (strain bovine RF122 / ET3-1)</name>
    <dbReference type="NCBI Taxonomy" id="273036"/>
    <lineage>
        <taxon>Bacteria</taxon>
        <taxon>Bacillati</taxon>
        <taxon>Bacillota</taxon>
        <taxon>Bacilli</taxon>
        <taxon>Bacillales</taxon>
        <taxon>Staphylococcaceae</taxon>
        <taxon>Staphylococcus</taxon>
    </lineage>
</organism>
<name>PAND_STAAB</name>
<accession>Q2YWG1</accession>
<dbReference type="EC" id="4.1.1.11" evidence="1"/>
<dbReference type="EMBL" id="AJ938182">
    <property type="protein sequence ID" value="CAI82158.1"/>
    <property type="molecule type" value="Genomic_DNA"/>
</dbReference>
<dbReference type="RefSeq" id="WP_000621530.1">
    <property type="nucleotide sequence ID" value="NC_007622.1"/>
</dbReference>
<dbReference type="SMR" id="Q2YWG1"/>
<dbReference type="KEGG" id="sab:SAB2470c"/>
<dbReference type="HOGENOM" id="CLU_115305_2_0_9"/>
<dbReference type="UniPathway" id="UPA00028">
    <property type="reaction ID" value="UER00002"/>
</dbReference>
<dbReference type="GO" id="GO:0005829">
    <property type="term" value="C:cytosol"/>
    <property type="evidence" value="ECO:0007669"/>
    <property type="project" value="TreeGrafter"/>
</dbReference>
<dbReference type="GO" id="GO:0004068">
    <property type="term" value="F:aspartate 1-decarboxylase activity"/>
    <property type="evidence" value="ECO:0007669"/>
    <property type="project" value="UniProtKB-UniRule"/>
</dbReference>
<dbReference type="GO" id="GO:0006523">
    <property type="term" value="P:alanine biosynthetic process"/>
    <property type="evidence" value="ECO:0007669"/>
    <property type="project" value="InterPro"/>
</dbReference>
<dbReference type="GO" id="GO:0015940">
    <property type="term" value="P:pantothenate biosynthetic process"/>
    <property type="evidence" value="ECO:0007669"/>
    <property type="project" value="UniProtKB-UniRule"/>
</dbReference>
<dbReference type="CDD" id="cd06919">
    <property type="entry name" value="Asp_decarbox"/>
    <property type="match status" value="1"/>
</dbReference>
<dbReference type="Gene3D" id="2.40.40.20">
    <property type="match status" value="1"/>
</dbReference>
<dbReference type="HAMAP" id="MF_00446">
    <property type="entry name" value="PanD"/>
    <property type="match status" value="1"/>
</dbReference>
<dbReference type="InterPro" id="IPR009010">
    <property type="entry name" value="Asp_de-COase-like_dom_sf"/>
</dbReference>
<dbReference type="InterPro" id="IPR003190">
    <property type="entry name" value="Asp_decarbox"/>
</dbReference>
<dbReference type="NCBIfam" id="TIGR00223">
    <property type="entry name" value="panD"/>
    <property type="match status" value="1"/>
</dbReference>
<dbReference type="PANTHER" id="PTHR21012">
    <property type="entry name" value="ASPARTATE 1-DECARBOXYLASE"/>
    <property type="match status" value="1"/>
</dbReference>
<dbReference type="PANTHER" id="PTHR21012:SF0">
    <property type="entry name" value="ASPARTATE 1-DECARBOXYLASE"/>
    <property type="match status" value="1"/>
</dbReference>
<dbReference type="Pfam" id="PF02261">
    <property type="entry name" value="Asp_decarbox"/>
    <property type="match status" value="1"/>
</dbReference>
<dbReference type="PIRSF" id="PIRSF006246">
    <property type="entry name" value="Asp_decarbox"/>
    <property type="match status" value="1"/>
</dbReference>
<dbReference type="SUPFAM" id="SSF50692">
    <property type="entry name" value="ADC-like"/>
    <property type="match status" value="1"/>
</dbReference>